<protein>
    <recommendedName>
        <fullName evidence="2">Small ribosomal subunit protein uS4c</fullName>
    </recommendedName>
    <alternativeName>
        <fullName>30S ribosomal protein S4, chloroplastic</fullName>
    </alternativeName>
</protein>
<keyword id="KW-0150">Chloroplast</keyword>
<keyword id="KW-0934">Plastid</keyword>
<keyword id="KW-0687">Ribonucleoprotein</keyword>
<keyword id="KW-0689">Ribosomal protein</keyword>
<keyword id="KW-0694">RNA-binding</keyword>
<keyword id="KW-0699">rRNA-binding</keyword>
<geneLocation type="chloroplast"/>
<proteinExistence type="inferred from homology"/>
<sequence length="212" mass="24538">MSRYRGPRLKIIRRLNTPLPGLTSSPIVNSTVNTKSQRKDKSEYRIRLEEKQKLRFHYGITERQLLRYVRLARRAKGSTGQVLLQLLEMRLDNIIFRLGMAPTIPAARQLVNHGHVLVNERVVDIPSFRCKPQENISIRDRARSRALVDKNLNNSQESKKLSPSRDFLSKVPTHLRINTKNYKASVNQVVNRNSIGVKVNELLVVEYYSRQA</sequence>
<dbReference type="EMBL" id="AY958085">
    <property type="protein sequence ID" value="AAX45759.1"/>
    <property type="molecule type" value="Genomic_DNA"/>
</dbReference>
<dbReference type="RefSeq" id="YP_636392.1">
    <property type="nucleotide sequence ID" value="NC_008116.1"/>
</dbReference>
<dbReference type="SMR" id="Q32RY4"/>
<dbReference type="GeneID" id="4108633"/>
<dbReference type="GO" id="GO:0009507">
    <property type="term" value="C:chloroplast"/>
    <property type="evidence" value="ECO:0007669"/>
    <property type="project" value="UniProtKB-SubCell"/>
</dbReference>
<dbReference type="GO" id="GO:0015935">
    <property type="term" value="C:small ribosomal subunit"/>
    <property type="evidence" value="ECO:0007669"/>
    <property type="project" value="InterPro"/>
</dbReference>
<dbReference type="GO" id="GO:0019843">
    <property type="term" value="F:rRNA binding"/>
    <property type="evidence" value="ECO:0007669"/>
    <property type="project" value="UniProtKB-UniRule"/>
</dbReference>
<dbReference type="GO" id="GO:0003735">
    <property type="term" value="F:structural constituent of ribosome"/>
    <property type="evidence" value="ECO:0007669"/>
    <property type="project" value="InterPro"/>
</dbReference>
<dbReference type="GO" id="GO:0042274">
    <property type="term" value="P:ribosomal small subunit biogenesis"/>
    <property type="evidence" value="ECO:0007669"/>
    <property type="project" value="TreeGrafter"/>
</dbReference>
<dbReference type="GO" id="GO:0006412">
    <property type="term" value="P:translation"/>
    <property type="evidence" value="ECO:0007669"/>
    <property type="project" value="UniProtKB-UniRule"/>
</dbReference>
<dbReference type="CDD" id="cd00165">
    <property type="entry name" value="S4"/>
    <property type="match status" value="1"/>
</dbReference>
<dbReference type="FunFam" id="3.10.290.10:FF:000001">
    <property type="entry name" value="30S ribosomal protein S4"/>
    <property type="match status" value="1"/>
</dbReference>
<dbReference type="FunFam" id="1.10.1050.10:FF:000002">
    <property type="entry name" value="30S ribosomal protein S4, chloroplastic"/>
    <property type="match status" value="1"/>
</dbReference>
<dbReference type="Gene3D" id="1.10.1050.10">
    <property type="entry name" value="Ribosomal Protein S4 Delta 41, Chain A, domain 1"/>
    <property type="match status" value="1"/>
</dbReference>
<dbReference type="Gene3D" id="3.10.290.10">
    <property type="entry name" value="RNA-binding S4 domain"/>
    <property type="match status" value="1"/>
</dbReference>
<dbReference type="HAMAP" id="MF_01306_B">
    <property type="entry name" value="Ribosomal_uS4_B"/>
    <property type="match status" value="1"/>
</dbReference>
<dbReference type="InterPro" id="IPR022801">
    <property type="entry name" value="Ribosomal_uS4"/>
</dbReference>
<dbReference type="InterPro" id="IPR005709">
    <property type="entry name" value="Ribosomal_uS4_bac-type"/>
</dbReference>
<dbReference type="InterPro" id="IPR018079">
    <property type="entry name" value="Ribosomal_uS4_CS"/>
</dbReference>
<dbReference type="InterPro" id="IPR001912">
    <property type="entry name" value="Ribosomal_uS4_N"/>
</dbReference>
<dbReference type="InterPro" id="IPR002942">
    <property type="entry name" value="S4_RNA-bd"/>
</dbReference>
<dbReference type="InterPro" id="IPR036986">
    <property type="entry name" value="S4_RNA-bd_sf"/>
</dbReference>
<dbReference type="NCBIfam" id="NF003717">
    <property type="entry name" value="PRK05327.1"/>
    <property type="match status" value="1"/>
</dbReference>
<dbReference type="NCBIfam" id="TIGR01017">
    <property type="entry name" value="rpsD_bact"/>
    <property type="match status" value="1"/>
</dbReference>
<dbReference type="PANTHER" id="PTHR11831">
    <property type="entry name" value="30S 40S RIBOSOMAL PROTEIN"/>
    <property type="match status" value="1"/>
</dbReference>
<dbReference type="PANTHER" id="PTHR11831:SF4">
    <property type="entry name" value="SMALL RIBOSOMAL SUBUNIT PROTEIN US4M"/>
    <property type="match status" value="1"/>
</dbReference>
<dbReference type="Pfam" id="PF00163">
    <property type="entry name" value="Ribosomal_S4"/>
    <property type="match status" value="1"/>
</dbReference>
<dbReference type="Pfam" id="PF01479">
    <property type="entry name" value="S4"/>
    <property type="match status" value="1"/>
</dbReference>
<dbReference type="SMART" id="SM01390">
    <property type="entry name" value="Ribosomal_S4"/>
    <property type="match status" value="1"/>
</dbReference>
<dbReference type="SMART" id="SM00363">
    <property type="entry name" value="S4"/>
    <property type="match status" value="1"/>
</dbReference>
<dbReference type="SUPFAM" id="SSF55174">
    <property type="entry name" value="Alpha-L RNA-binding motif"/>
    <property type="match status" value="1"/>
</dbReference>
<dbReference type="PROSITE" id="PS00632">
    <property type="entry name" value="RIBOSOMAL_S4"/>
    <property type="match status" value="1"/>
</dbReference>
<dbReference type="PROSITE" id="PS50889">
    <property type="entry name" value="S4"/>
    <property type="match status" value="1"/>
</dbReference>
<feature type="chain" id="PRO_0000228958" description="Small ribosomal subunit protein uS4c">
    <location>
        <begin position="1"/>
        <end position="212"/>
    </location>
</feature>
<feature type="domain" description="S4 RNA-binding">
    <location>
        <begin position="89"/>
        <end position="152"/>
    </location>
</feature>
<organism>
    <name type="scientific">Staurastrum punctulatum</name>
    <name type="common">Green alga</name>
    <name type="synonym">Cosmoastrum punctulatum</name>
    <dbReference type="NCBI Taxonomy" id="102822"/>
    <lineage>
        <taxon>Eukaryota</taxon>
        <taxon>Viridiplantae</taxon>
        <taxon>Streptophyta</taxon>
        <taxon>Zygnematophyceae</taxon>
        <taxon>Zygnematophycidae</taxon>
        <taxon>Desmidiales</taxon>
        <taxon>Desmidiaceae</taxon>
        <taxon>Staurastrum</taxon>
    </lineage>
</organism>
<evidence type="ECO:0000250" key="1"/>
<evidence type="ECO:0000305" key="2"/>
<accession>Q32RY4</accession>
<gene>
    <name type="primary">rps4</name>
</gene>
<name>RR4_STAPU</name>
<reference key="1">
    <citation type="journal article" date="2005" name="BMC Biol.">
        <title>The complete chloroplast DNA sequences of the charophycean green algae Staurastrum and Zygnema reveal that the chloroplast genome underwent extensive changes during the evolution of the Zygnematales.</title>
        <authorList>
            <person name="Turmel M."/>
            <person name="Otis C."/>
            <person name="Lemieux C."/>
        </authorList>
    </citation>
    <scope>NUCLEOTIDE SEQUENCE [LARGE SCALE GENOMIC DNA]</scope>
</reference>
<comment type="function">
    <text evidence="1">One of the primary rRNA binding proteins, it binds directly to 16S rRNA where it nucleates assembly of the body of the 30S subunit.</text>
</comment>
<comment type="function">
    <text evidence="1">With S5 and S12 plays an important role in translational accuracy.</text>
</comment>
<comment type="subunit">
    <text evidence="1">Part of the 30S ribosomal subunit. Contacts protein S5. The interaction surface between S4 and S5 is involved in control of translational fidelity (By similarity).</text>
</comment>
<comment type="subcellular location">
    <subcellularLocation>
        <location>Plastid</location>
        <location>Chloroplast</location>
    </subcellularLocation>
</comment>
<comment type="similarity">
    <text evidence="2">Belongs to the universal ribosomal protein uS4 family.</text>
</comment>